<sequence>MLDWYISVSFGELTLKGKNRHTFEKRAISKILDAISDYKIEEYYQEQGKLYIKADVNDFDEIIDHIKKVFGIVYISPCVKCEKTVESMQDGVLKIIEGKIIKDKLQTFKVDVHRVDKRFEPKSPELNPLLGGTILKKYGNYVKVDIKNPDFFIYVDIKDNCYVYTDRIKGWGGLPIGSSGRGLLLLSGGIDSPVAAFLMAKRGVRVDCLHFHSYPFTSQRGFEKVKQLAEEVSYYTGNINFYSVNLLPVYKAITKNCKERMMTIISRRFMMRIAERIANENKIDALITGESLGQVASQTIQGVSVINEVTSLPILRPLIASDKTEIIEIAREIGTYETSILPFEDCCTVFTPKRPVTKPRIYDVKREEENLDIEALVQECIDNMELIKIRQ</sequence>
<feature type="chain" id="PRO_1000090015" description="Probable tRNA sulfurtransferase">
    <location>
        <begin position="1"/>
        <end position="391"/>
    </location>
</feature>
<feature type="domain" description="THUMP" evidence="1">
    <location>
        <begin position="60"/>
        <end position="167"/>
    </location>
</feature>
<feature type="binding site" evidence="1">
    <location>
        <begin position="185"/>
        <end position="186"/>
    </location>
    <ligand>
        <name>ATP</name>
        <dbReference type="ChEBI" id="CHEBI:30616"/>
    </ligand>
</feature>
<feature type="binding site" evidence="1">
    <location>
        <begin position="210"/>
        <end position="211"/>
    </location>
    <ligand>
        <name>ATP</name>
        <dbReference type="ChEBI" id="CHEBI:30616"/>
    </ligand>
</feature>
<feature type="binding site" evidence="1">
    <location>
        <position position="267"/>
    </location>
    <ligand>
        <name>ATP</name>
        <dbReference type="ChEBI" id="CHEBI:30616"/>
    </ligand>
</feature>
<feature type="binding site" evidence="1">
    <location>
        <position position="289"/>
    </location>
    <ligand>
        <name>ATP</name>
        <dbReference type="ChEBI" id="CHEBI:30616"/>
    </ligand>
</feature>
<feature type="binding site" evidence="1">
    <location>
        <position position="298"/>
    </location>
    <ligand>
        <name>ATP</name>
        <dbReference type="ChEBI" id="CHEBI:30616"/>
    </ligand>
</feature>
<evidence type="ECO:0000255" key="1">
    <source>
        <dbReference type="HAMAP-Rule" id="MF_00021"/>
    </source>
</evidence>
<protein>
    <recommendedName>
        <fullName evidence="1">Probable tRNA sulfurtransferase</fullName>
        <ecNumber evidence="1">2.8.1.4</ecNumber>
    </recommendedName>
    <alternativeName>
        <fullName evidence="1">Sulfur carrier protein ThiS sulfurtransferase</fullName>
    </alternativeName>
    <alternativeName>
        <fullName evidence="1">Thiamine biosynthesis protein ThiI</fullName>
    </alternativeName>
    <alternativeName>
        <fullName evidence="1">tRNA 4-thiouridine synthase</fullName>
    </alternativeName>
</protein>
<reference key="1">
    <citation type="journal article" date="2008" name="DNA Res.">
        <title>Complete genome sequence of Finegoldia magna, an anaerobic opportunistic pathogen.</title>
        <authorList>
            <person name="Goto T."/>
            <person name="Yamashita A."/>
            <person name="Hirakawa H."/>
            <person name="Matsutani M."/>
            <person name="Todo K."/>
            <person name="Ohshima K."/>
            <person name="Toh H."/>
            <person name="Miyamoto K."/>
            <person name="Kuhara S."/>
            <person name="Hattori M."/>
            <person name="Shimizu T."/>
            <person name="Akimoto S."/>
        </authorList>
    </citation>
    <scope>NUCLEOTIDE SEQUENCE [LARGE SCALE GENOMIC DNA]</scope>
    <source>
        <strain>ATCC 29328 / DSM 20472 / WAL 2508</strain>
    </source>
</reference>
<proteinExistence type="inferred from homology"/>
<keyword id="KW-0067">ATP-binding</keyword>
<keyword id="KW-0963">Cytoplasm</keyword>
<keyword id="KW-0547">Nucleotide-binding</keyword>
<keyword id="KW-1185">Reference proteome</keyword>
<keyword id="KW-0694">RNA-binding</keyword>
<keyword id="KW-0784">Thiamine biosynthesis</keyword>
<keyword id="KW-0808">Transferase</keyword>
<keyword id="KW-0820">tRNA-binding</keyword>
<dbReference type="EC" id="2.8.1.4" evidence="1"/>
<dbReference type="EMBL" id="AP008971">
    <property type="protein sequence ID" value="BAG07977.1"/>
    <property type="molecule type" value="Genomic_DNA"/>
</dbReference>
<dbReference type="RefSeq" id="WP_002839266.1">
    <property type="nucleotide sequence ID" value="NC_010376.1"/>
</dbReference>
<dbReference type="SMR" id="B0RZV0"/>
<dbReference type="STRING" id="334413.FMG_0559"/>
<dbReference type="KEGG" id="fma:FMG_0559"/>
<dbReference type="eggNOG" id="COG0301">
    <property type="taxonomic scope" value="Bacteria"/>
</dbReference>
<dbReference type="HOGENOM" id="CLU_037952_4_0_9"/>
<dbReference type="UniPathway" id="UPA00060"/>
<dbReference type="Proteomes" id="UP000001319">
    <property type="component" value="Chromosome"/>
</dbReference>
<dbReference type="GO" id="GO:0005829">
    <property type="term" value="C:cytosol"/>
    <property type="evidence" value="ECO:0007669"/>
    <property type="project" value="TreeGrafter"/>
</dbReference>
<dbReference type="GO" id="GO:0005524">
    <property type="term" value="F:ATP binding"/>
    <property type="evidence" value="ECO:0007669"/>
    <property type="project" value="UniProtKB-UniRule"/>
</dbReference>
<dbReference type="GO" id="GO:0004810">
    <property type="term" value="F:CCA tRNA nucleotidyltransferase activity"/>
    <property type="evidence" value="ECO:0007669"/>
    <property type="project" value="InterPro"/>
</dbReference>
<dbReference type="GO" id="GO:0000049">
    <property type="term" value="F:tRNA binding"/>
    <property type="evidence" value="ECO:0007669"/>
    <property type="project" value="UniProtKB-UniRule"/>
</dbReference>
<dbReference type="GO" id="GO:0140741">
    <property type="term" value="F:tRNA-uracil-4 sulfurtransferase activity"/>
    <property type="evidence" value="ECO:0007669"/>
    <property type="project" value="UniProtKB-EC"/>
</dbReference>
<dbReference type="GO" id="GO:0009228">
    <property type="term" value="P:thiamine biosynthetic process"/>
    <property type="evidence" value="ECO:0007669"/>
    <property type="project" value="UniProtKB-KW"/>
</dbReference>
<dbReference type="GO" id="GO:0009229">
    <property type="term" value="P:thiamine diphosphate biosynthetic process"/>
    <property type="evidence" value="ECO:0007669"/>
    <property type="project" value="UniProtKB-UniRule"/>
</dbReference>
<dbReference type="GO" id="GO:0052837">
    <property type="term" value="P:thiazole biosynthetic process"/>
    <property type="evidence" value="ECO:0007669"/>
    <property type="project" value="TreeGrafter"/>
</dbReference>
<dbReference type="GO" id="GO:0002937">
    <property type="term" value="P:tRNA 4-thiouridine biosynthesis"/>
    <property type="evidence" value="ECO:0007669"/>
    <property type="project" value="TreeGrafter"/>
</dbReference>
<dbReference type="CDD" id="cd01712">
    <property type="entry name" value="PPase_ThiI"/>
    <property type="match status" value="1"/>
</dbReference>
<dbReference type="CDD" id="cd11716">
    <property type="entry name" value="THUMP_ThiI"/>
    <property type="match status" value="1"/>
</dbReference>
<dbReference type="FunFam" id="3.40.50.620:FF:000053">
    <property type="entry name" value="Probable tRNA sulfurtransferase"/>
    <property type="match status" value="1"/>
</dbReference>
<dbReference type="Gene3D" id="3.30.2130.30">
    <property type="match status" value="1"/>
</dbReference>
<dbReference type="Gene3D" id="3.40.50.620">
    <property type="entry name" value="HUPs"/>
    <property type="match status" value="1"/>
</dbReference>
<dbReference type="HAMAP" id="MF_00021">
    <property type="entry name" value="ThiI"/>
    <property type="match status" value="1"/>
</dbReference>
<dbReference type="InterPro" id="IPR014729">
    <property type="entry name" value="Rossmann-like_a/b/a_fold"/>
</dbReference>
<dbReference type="InterPro" id="IPR020536">
    <property type="entry name" value="ThiI_AANH"/>
</dbReference>
<dbReference type="InterPro" id="IPR054173">
    <property type="entry name" value="ThiI_fer"/>
</dbReference>
<dbReference type="InterPro" id="IPR049961">
    <property type="entry name" value="ThiI_N"/>
</dbReference>
<dbReference type="InterPro" id="IPR004114">
    <property type="entry name" value="THUMP_dom"/>
</dbReference>
<dbReference type="InterPro" id="IPR049962">
    <property type="entry name" value="THUMP_ThiI"/>
</dbReference>
<dbReference type="InterPro" id="IPR003720">
    <property type="entry name" value="tRNA_STrfase"/>
</dbReference>
<dbReference type="InterPro" id="IPR050102">
    <property type="entry name" value="tRNA_sulfurtransferase_ThiI"/>
</dbReference>
<dbReference type="NCBIfam" id="TIGR00342">
    <property type="entry name" value="tRNA uracil 4-sulfurtransferase ThiI"/>
    <property type="match status" value="1"/>
</dbReference>
<dbReference type="PANTHER" id="PTHR43209">
    <property type="entry name" value="TRNA SULFURTRANSFERASE"/>
    <property type="match status" value="1"/>
</dbReference>
<dbReference type="PANTHER" id="PTHR43209:SF1">
    <property type="entry name" value="TRNA SULFURTRANSFERASE"/>
    <property type="match status" value="1"/>
</dbReference>
<dbReference type="Pfam" id="PF02568">
    <property type="entry name" value="ThiI"/>
    <property type="match status" value="1"/>
</dbReference>
<dbReference type="Pfam" id="PF22025">
    <property type="entry name" value="ThiI_fer"/>
    <property type="match status" value="1"/>
</dbReference>
<dbReference type="Pfam" id="PF02926">
    <property type="entry name" value="THUMP"/>
    <property type="match status" value="1"/>
</dbReference>
<dbReference type="SMART" id="SM00981">
    <property type="entry name" value="THUMP"/>
    <property type="match status" value="1"/>
</dbReference>
<dbReference type="SUPFAM" id="SSF52402">
    <property type="entry name" value="Adenine nucleotide alpha hydrolases-like"/>
    <property type="match status" value="1"/>
</dbReference>
<dbReference type="SUPFAM" id="SSF143437">
    <property type="entry name" value="THUMP domain-like"/>
    <property type="match status" value="1"/>
</dbReference>
<dbReference type="PROSITE" id="PS51165">
    <property type="entry name" value="THUMP"/>
    <property type="match status" value="1"/>
</dbReference>
<accession>B0RZV0</accession>
<name>THII_FINM2</name>
<gene>
    <name evidence="1" type="primary">thiI</name>
    <name type="ordered locus">FMG_0559</name>
</gene>
<organism>
    <name type="scientific">Finegoldia magna (strain ATCC 29328 / DSM 20472 / WAL 2508)</name>
    <name type="common">Peptostreptococcus magnus</name>
    <dbReference type="NCBI Taxonomy" id="334413"/>
    <lineage>
        <taxon>Bacteria</taxon>
        <taxon>Bacillati</taxon>
        <taxon>Bacillota</taxon>
        <taxon>Tissierellia</taxon>
        <taxon>Tissierellales</taxon>
        <taxon>Peptoniphilaceae</taxon>
        <taxon>Finegoldia</taxon>
    </lineage>
</organism>
<comment type="function">
    <text evidence="1">Catalyzes the ATP-dependent transfer of a sulfur to tRNA to produce 4-thiouridine in position 8 of tRNAs, which functions as a near-UV photosensor. Also catalyzes the transfer of sulfur to the sulfur carrier protein ThiS, forming ThiS-thiocarboxylate. This is a step in the synthesis of thiazole, in the thiamine biosynthesis pathway. The sulfur is donated as persulfide by IscS.</text>
</comment>
<comment type="catalytic activity">
    <reaction evidence="1">
        <text>[ThiI sulfur-carrier protein]-S-sulfanyl-L-cysteine + a uridine in tRNA + 2 reduced [2Fe-2S]-[ferredoxin] + ATP + H(+) = [ThiI sulfur-carrier protein]-L-cysteine + a 4-thiouridine in tRNA + 2 oxidized [2Fe-2S]-[ferredoxin] + AMP + diphosphate</text>
        <dbReference type="Rhea" id="RHEA:24176"/>
        <dbReference type="Rhea" id="RHEA-COMP:10000"/>
        <dbReference type="Rhea" id="RHEA-COMP:10001"/>
        <dbReference type="Rhea" id="RHEA-COMP:13337"/>
        <dbReference type="Rhea" id="RHEA-COMP:13338"/>
        <dbReference type="Rhea" id="RHEA-COMP:13339"/>
        <dbReference type="Rhea" id="RHEA-COMP:13340"/>
        <dbReference type="ChEBI" id="CHEBI:15378"/>
        <dbReference type="ChEBI" id="CHEBI:29950"/>
        <dbReference type="ChEBI" id="CHEBI:30616"/>
        <dbReference type="ChEBI" id="CHEBI:33019"/>
        <dbReference type="ChEBI" id="CHEBI:33737"/>
        <dbReference type="ChEBI" id="CHEBI:33738"/>
        <dbReference type="ChEBI" id="CHEBI:61963"/>
        <dbReference type="ChEBI" id="CHEBI:65315"/>
        <dbReference type="ChEBI" id="CHEBI:136798"/>
        <dbReference type="ChEBI" id="CHEBI:456215"/>
        <dbReference type="EC" id="2.8.1.4"/>
    </reaction>
</comment>
<comment type="catalytic activity">
    <reaction evidence="1">
        <text>[ThiS sulfur-carrier protein]-C-terminal Gly-Gly-AMP + S-sulfanyl-L-cysteinyl-[cysteine desulfurase] + AH2 = [ThiS sulfur-carrier protein]-C-terminal-Gly-aminoethanethioate + L-cysteinyl-[cysteine desulfurase] + A + AMP + 2 H(+)</text>
        <dbReference type="Rhea" id="RHEA:43340"/>
        <dbReference type="Rhea" id="RHEA-COMP:12157"/>
        <dbReference type="Rhea" id="RHEA-COMP:12158"/>
        <dbReference type="Rhea" id="RHEA-COMP:12910"/>
        <dbReference type="Rhea" id="RHEA-COMP:19908"/>
        <dbReference type="ChEBI" id="CHEBI:13193"/>
        <dbReference type="ChEBI" id="CHEBI:15378"/>
        <dbReference type="ChEBI" id="CHEBI:17499"/>
        <dbReference type="ChEBI" id="CHEBI:29950"/>
        <dbReference type="ChEBI" id="CHEBI:61963"/>
        <dbReference type="ChEBI" id="CHEBI:90618"/>
        <dbReference type="ChEBI" id="CHEBI:232372"/>
        <dbReference type="ChEBI" id="CHEBI:456215"/>
    </reaction>
</comment>
<comment type="pathway">
    <text evidence="1">Cofactor biosynthesis; thiamine diphosphate biosynthesis.</text>
</comment>
<comment type="subcellular location">
    <subcellularLocation>
        <location evidence="1">Cytoplasm</location>
    </subcellularLocation>
</comment>
<comment type="similarity">
    <text evidence="1">Belongs to the ThiI family.</text>
</comment>